<proteinExistence type="evidence at transcript level"/>
<keyword id="KW-0007">Acetylation</keyword>
<keyword id="KW-0158">Chromosome</keyword>
<keyword id="KW-0238">DNA-binding</keyword>
<keyword id="KW-1017">Isopeptide bond</keyword>
<keyword id="KW-0544">Nucleosome core</keyword>
<keyword id="KW-0539">Nucleus</keyword>
<keyword id="KW-0597">Phosphoprotein</keyword>
<keyword id="KW-0832">Ubl conjugation</keyword>
<dbReference type="EMBL" id="X94188">
    <property type="protein sequence ID" value="CAA63898.1"/>
    <property type="molecule type" value="mRNA"/>
</dbReference>
<dbReference type="SMR" id="P78567"/>
<dbReference type="OMA" id="PLVCHIS"/>
<dbReference type="GO" id="GO:0000786">
    <property type="term" value="C:nucleosome"/>
    <property type="evidence" value="ECO:0007669"/>
    <property type="project" value="UniProtKB-KW"/>
</dbReference>
<dbReference type="GO" id="GO:0005634">
    <property type="term" value="C:nucleus"/>
    <property type="evidence" value="ECO:0007669"/>
    <property type="project" value="UniProtKB-SubCell"/>
</dbReference>
<dbReference type="GO" id="GO:0003677">
    <property type="term" value="F:DNA binding"/>
    <property type="evidence" value="ECO:0007669"/>
    <property type="project" value="UniProtKB-KW"/>
</dbReference>
<dbReference type="GO" id="GO:0046982">
    <property type="term" value="F:protein heterodimerization activity"/>
    <property type="evidence" value="ECO:0007669"/>
    <property type="project" value="InterPro"/>
</dbReference>
<dbReference type="GO" id="GO:0030527">
    <property type="term" value="F:structural constituent of chromatin"/>
    <property type="evidence" value="ECO:0007669"/>
    <property type="project" value="InterPro"/>
</dbReference>
<dbReference type="CDD" id="cd22910">
    <property type="entry name" value="HFD_H2B"/>
    <property type="match status" value="1"/>
</dbReference>
<dbReference type="FunFam" id="1.10.20.10:FF:000014">
    <property type="entry name" value="Histone H2B"/>
    <property type="match status" value="1"/>
</dbReference>
<dbReference type="Gene3D" id="1.10.20.10">
    <property type="entry name" value="Histone, subunit A"/>
    <property type="match status" value="1"/>
</dbReference>
<dbReference type="InterPro" id="IPR009072">
    <property type="entry name" value="Histone-fold"/>
</dbReference>
<dbReference type="InterPro" id="IPR007125">
    <property type="entry name" value="Histone_H2A/H2B/H3"/>
</dbReference>
<dbReference type="InterPro" id="IPR000558">
    <property type="entry name" value="Histone_H2B"/>
</dbReference>
<dbReference type="InterPro" id="IPR055333">
    <property type="entry name" value="HISTONE_H2B_site"/>
</dbReference>
<dbReference type="PANTHER" id="PTHR23428">
    <property type="entry name" value="HISTONE H2B"/>
    <property type="match status" value="1"/>
</dbReference>
<dbReference type="Pfam" id="PF00125">
    <property type="entry name" value="Histone"/>
    <property type="match status" value="1"/>
</dbReference>
<dbReference type="PRINTS" id="PR00621">
    <property type="entry name" value="HISTONEH2B"/>
</dbReference>
<dbReference type="SMART" id="SM00427">
    <property type="entry name" value="H2B"/>
    <property type="match status" value="1"/>
</dbReference>
<dbReference type="SUPFAM" id="SSF47113">
    <property type="entry name" value="Histone-fold"/>
    <property type="match status" value="1"/>
</dbReference>
<dbReference type="PROSITE" id="PS00357">
    <property type="entry name" value="HISTONE_H2B"/>
    <property type="match status" value="1"/>
</dbReference>
<organism>
    <name type="scientific">Agaricus bisporus</name>
    <name type="common">White button mushroom</name>
    <dbReference type="NCBI Taxonomy" id="5341"/>
    <lineage>
        <taxon>Eukaryota</taxon>
        <taxon>Fungi</taxon>
        <taxon>Dikarya</taxon>
        <taxon>Basidiomycota</taxon>
        <taxon>Agaricomycotina</taxon>
        <taxon>Agaricomycetes</taxon>
        <taxon>Agaricomycetidae</taxon>
        <taxon>Agaricales</taxon>
        <taxon>Agaricineae</taxon>
        <taxon>Agaricaceae</taxon>
        <taxon>Agaricus</taxon>
    </lineage>
</organism>
<comment type="function">
    <text>Core component of nucleosome. Nucleosomes wrap and compact DNA into chromatin, limiting DNA accessibility to the cellular machineries which require DNA as a template. Histones thereby play a central role in transcription regulation, DNA repair, DNA replication and chromosomal stability. DNA accessibility is regulated via a complex set of post-translational modifications of histones, also called histone code, and nucleosome remodeling.</text>
</comment>
<comment type="subunit">
    <text>The nucleosome is a histone octamer containing two molecules each of H2A, H2B, H3 and H4 assembled in one H3-H4 heterotetramer and two H2A-H2B heterodimers. The octamer wraps approximately 147 bp of DNA.</text>
</comment>
<comment type="subcellular location">
    <subcellularLocation>
        <location>Nucleus</location>
    </subcellularLocation>
    <subcellularLocation>
        <location>Chromosome</location>
    </subcellularLocation>
</comment>
<comment type="PTM">
    <text evidence="1">Monoubiquitinated to form H2BK123ub1. H2BK123ub1 gives a specific tag for epigenetic transcriptional activation and is also prerequisite for H3K4me and H3K79me formation. H2BK123ub1 also modulates the formation of double-strand breaks during meiosis and is a prerequisite for DNA-damage checkpoint activation (By similarity).</text>
</comment>
<comment type="PTM">
    <text evidence="1">Phosphorylated to form H2BS10ph during progression through meiotic prophase. May be correlated with chromosome condensation (By similarity).</text>
</comment>
<comment type="PTM">
    <text evidence="1">Acetylation of N-terminal lysines and particularly formation of H2BK11ac has a positive effect on transcription.</text>
</comment>
<comment type="PTM">
    <text evidence="1">Sumoylation to form H2BK6su occurs preferentially near the telomeres and represses gene transcription.</text>
</comment>
<comment type="similarity">
    <text evidence="3">Belongs to the histone H2B family.</text>
</comment>
<comment type="caution">
    <text evidence="3">To ensure consistency between histone entries, we follow the 'Brno' nomenclature for histone modifications, with positions referring to those used in the literature for the 'closest' model organism. Due to slight variations in histone sequences between organisms and to the presence of initiator methionine in UniProtKB/Swiss-Prot sequences, the actual positions of modified amino acids in the sequence generally differ. In this entry the following conventions are used: H2BK6ac = acetylated Lys-11; H2BK6su = sumoylated Lys-11; H2BS10ph = phosphorylated Ser-15; H2BK11ac = acetylated Lys-19; H2BK123ub1 = monoubiquitinated Lys-137.</text>
</comment>
<sequence>MAPKPASTAGKAPASTASKAPVKSDAAKTASKSKVSSGADGEKKKRKKTRKETYSSYIYKVLKQVHPDTGISNKAMAILNSFVNDIFERIATEASKLASYSKKSTISSREIQTSVRLILPGELAKHAISEGTKSVTKFSSGGK</sequence>
<name>H2B_AGABI</name>
<gene>
    <name type="primary">htbA</name>
</gene>
<accession>P78567</accession>
<protein>
    <recommendedName>
        <fullName>Histone H2B</fullName>
    </recommendedName>
</protein>
<reference key="1">
    <citation type="journal article" date="1996" name="Appl. Environ. Microbiol.">
        <title>Isolation of expressed sequence tags of Agaricus bisporus and their assignment to chromosomes.</title>
        <authorList>
            <person name="Sonnenberg A.S.M."/>
            <person name="de Groot P.W.J."/>
            <person name="Schaap P.J."/>
            <person name="Baars J.J.P."/>
            <person name="Visser J."/>
            <person name="van Griensven L.J.L.D."/>
        </authorList>
    </citation>
    <scope>NUCLEOTIDE SEQUENCE [MRNA]</scope>
    <source>
        <strain>Horst U1</strain>
    </source>
</reference>
<feature type="initiator methionine" description="Removed" evidence="1">
    <location>
        <position position="1"/>
    </location>
</feature>
<feature type="chain" id="PRO_0000071926" description="Histone H2B">
    <location>
        <begin position="2"/>
        <end position="143"/>
    </location>
</feature>
<feature type="region of interest" description="Disordered" evidence="2">
    <location>
        <begin position="1"/>
        <end position="52"/>
    </location>
</feature>
<feature type="compositionally biased region" description="Low complexity" evidence="2">
    <location>
        <begin position="23"/>
        <end position="39"/>
    </location>
</feature>
<feature type="modified residue" description="N6-acetyllysine; alternate" evidence="1">
    <location>
        <position position="11"/>
    </location>
</feature>
<feature type="modified residue" description="Phosphoserine" evidence="1">
    <location>
        <position position="15"/>
    </location>
</feature>
<feature type="modified residue" description="N6-acetyllysine" evidence="1">
    <location>
        <position position="19"/>
    </location>
</feature>
<feature type="cross-link" description="Glycyl lysine isopeptide (Lys-Gly) (interchain with G-Cter in SUMO); alternate" evidence="1">
    <location>
        <position position="11"/>
    </location>
</feature>
<feature type="cross-link" description="Glycyl lysine isopeptide (Lys-Gly) (interchain with G-Cter in ubiquitin)" evidence="1">
    <location>
        <position position="137"/>
    </location>
</feature>
<evidence type="ECO:0000250" key="1"/>
<evidence type="ECO:0000256" key="2">
    <source>
        <dbReference type="SAM" id="MobiDB-lite"/>
    </source>
</evidence>
<evidence type="ECO:0000305" key="3"/>